<reference key="1">
    <citation type="journal article" date="1995" name="J. Bacteriol.">
        <title>Cloning and characterization of the katB gene of Pseudomonas aeruginosa encoding a hydrogen peroxide-inducible catalase: purification of KatB, cellular localization, and demonstration that it is essential for optimal resistance to hydrogen peroxide.</title>
        <authorList>
            <person name="Brown S.M."/>
            <person name="Howell M.L."/>
            <person name="Vasil M.L."/>
            <person name="Anderson A.J."/>
            <person name="Hassett D.J."/>
        </authorList>
    </citation>
    <scope>NUCLEOTIDE SEQUENCE [GENOMIC DNA]</scope>
    <source>
        <strain>FRD2</strain>
    </source>
</reference>
<reference key="2">
    <citation type="submission" date="1997-03" db="EMBL/GenBank/DDBJ databases">
        <title>Pseudomonas aeruginosa oxidative stress operon.</title>
        <authorList>
            <person name="Howell M.L."/>
            <person name="Heur M."/>
            <person name="Klotz M.G."/>
            <person name="Hassett D.J."/>
        </authorList>
    </citation>
    <scope>NUCLEOTIDE SEQUENCE [GENOMIC DNA]</scope>
    <source>
        <strain>FRD1</strain>
    </source>
</reference>
<reference key="3">
    <citation type="journal article" date="2000" name="Nature">
        <title>Complete genome sequence of Pseudomonas aeruginosa PAO1, an opportunistic pathogen.</title>
        <authorList>
            <person name="Stover C.K."/>
            <person name="Pham X.-Q.T."/>
            <person name="Erwin A.L."/>
            <person name="Mizoguchi S.D."/>
            <person name="Warrener P."/>
            <person name="Hickey M.J."/>
            <person name="Brinkman F.S.L."/>
            <person name="Hufnagle W.O."/>
            <person name="Kowalik D.J."/>
            <person name="Lagrou M."/>
            <person name="Garber R.L."/>
            <person name="Goltry L."/>
            <person name="Tolentino E."/>
            <person name="Westbrock-Wadman S."/>
            <person name="Yuan Y."/>
            <person name="Brody L.L."/>
            <person name="Coulter S.N."/>
            <person name="Folger K.R."/>
            <person name="Kas A."/>
            <person name="Larbig K."/>
            <person name="Lim R.M."/>
            <person name="Smith K.A."/>
            <person name="Spencer D.H."/>
            <person name="Wong G.K.-S."/>
            <person name="Wu Z."/>
            <person name="Paulsen I.T."/>
            <person name="Reizer J."/>
            <person name="Saier M.H. Jr."/>
            <person name="Hancock R.E.W."/>
            <person name="Lory S."/>
            <person name="Olson M.V."/>
        </authorList>
    </citation>
    <scope>NUCLEOTIDE SEQUENCE [LARGE SCALE GENOMIC DNA]</scope>
    <source>
        <strain>ATCC 15692 / DSM 22644 / CIP 104116 / JCM 14847 / LMG 12228 / 1C / PRS 101 / PAO1</strain>
    </source>
</reference>
<name>CATB_PSEAE</name>
<dbReference type="EC" id="1.11.1.6"/>
<dbReference type="EMBL" id="U34896">
    <property type="protein sequence ID" value="AAA79046.1"/>
    <property type="molecule type" value="Genomic_DNA"/>
</dbReference>
<dbReference type="EMBL" id="U89384">
    <property type="protein sequence ID" value="AAB49463.1"/>
    <property type="molecule type" value="Genomic_DNA"/>
</dbReference>
<dbReference type="EMBL" id="AE004091">
    <property type="protein sequence ID" value="AAG08001.1"/>
    <property type="molecule type" value="Genomic_DNA"/>
</dbReference>
<dbReference type="PIR" id="E83069">
    <property type="entry name" value="E83069"/>
</dbReference>
<dbReference type="RefSeq" id="NP_253303.1">
    <property type="nucleotide sequence ID" value="NC_002516.2"/>
</dbReference>
<dbReference type="RefSeq" id="WP_003094881.1">
    <property type="nucleotide sequence ID" value="NZ_QZGE01000004.1"/>
</dbReference>
<dbReference type="SMR" id="Q59635"/>
<dbReference type="STRING" id="208964.PA4613"/>
<dbReference type="PaxDb" id="208964-PA4613"/>
<dbReference type="GeneID" id="881120"/>
<dbReference type="KEGG" id="pae:PA4613"/>
<dbReference type="PATRIC" id="fig|208964.12.peg.4828"/>
<dbReference type="PseudoCAP" id="PA4613"/>
<dbReference type="HOGENOM" id="CLU_010645_2_0_6"/>
<dbReference type="InParanoid" id="Q59635"/>
<dbReference type="OrthoDB" id="9761719at2"/>
<dbReference type="PhylomeDB" id="Q59635"/>
<dbReference type="BioCyc" id="PAER208964:G1FZ6-4707-MONOMER"/>
<dbReference type="SABIO-RK" id="Q59635"/>
<dbReference type="Proteomes" id="UP000002438">
    <property type="component" value="Chromosome"/>
</dbReference>
<dbReference type="GO" id="GO:0005737">
    <property type="term" value="C:cytoplasm"/>
    <property type="evidence" value="ECO:0000318"/>
    <property type="project" value="GO_Central"/>
</dbReference>
<dbReference type="GO" id="GO:0042597">
    <property type="term" value="C:periplasmic space"/>
    <property type="evidence" value="ECO:0007669"/>
    <property type="project" value="UniProtKB-SubCell"/>
</dbReference>
<dbReference type="GO" id="GO:0004096">
    <property type="term" value="F:catalase activity"/>
    <property type="evidence" value="ECO:0000318"/>
    <property type="project" value="GO_Central"/>
</dbReference>
<dbReference type="GO" id="GO:0020037">
    <property type="term" value="F:heme binding"/>
    <property type="evidence" value="ECO:0000318"/>
    <property type="project" value="GO_Central"/>
</dbReference>
<dbReference type="GO" id="GO:0046872">
    <property type="term" value="F:metal ion binding"/>
    <property type="evidence" value="ECO:0007669"/>
    <property type="project" value="UniProtKB-KW"/>
</dbReference>
<dbReference type="GO" id="GO:0042744">
    <property type="term" value="P:hydrogen peroxide catabolic process"/>
    <property type="evidence" value="ECO:0000318"/>
    <property type="project" value="GO_Central"/>
</dbReference>
<dbReference type="GO" id="GO:0042542">
    <property type="term" value="P:response to hydrogen peroxide"/>
    <property type="evidence" value="ECO:0000318"/>
    <property type="project" value="GO_Central"/>
</dbReference>
<dbReference type="CDD" id="cd08154">
    <property type="entry name" value="catalase_clade_1"/>
    <property type="match status" value="1"/>
</dbReference>
<dbReference type="FunFam" id="2.40.180.10:FF:000002">
    <property type="entry name" value="Catalase"/>
    <property type="match status" value="1"/>
</dbReference>
<dbReference type="Gene3D" id="2.40.180.10">
    <property type="entry name" value="Catalase core domain"/>
    <property type="match status" value="1"/>
</dbReference>
<dbReference type="InterPro" id="IPR018028">
    <property type="entry name" value="Catalase"/>
</dbReference>
<dbReference type="InterPro" id="IPR024708">
    <property type="entry name" value="Catalase_AS"/>
</dbReference>
<dbReference type="InterPro" id="IPR024711">
    <property type="entry name" value="Catalase_clade1/3"/>
</dbReference>
<dbReference type="InterPro" id="IPR011614">
    <property type="entry name" value="Catalase_core"/>
</dbReference>
<dbReference type="InterPro" id="IPR002226">
    <property type="entry name" value="Catalase_haem_BS"/>
</dbReference>
<dbReference type="InterPro" id="IPR010582">
    <property type="entry name" value="Catalase_immune_responsive"/>
</dbReference>
<dbReference type="InterPro" id="IPR020835">
    <property type="entry name" value="Catalase_sf"/>
</dbReference>
<dbReference type="PANTHER" id="PTHR11465">
    <property type="entry name" value="CATALASE"/>
    <property type="match status" value="1"/>
</dbReference>
<dbReference type="PANTHER" id="PTHR11465:SF23">
    <property type="entry name" value="CATALASE-2"/>
    <property type="match status" value="1"/>
</dbReference>
<dbReference type="Pfam" id="PF00199">
    <property type="entry name" value="Catalase"/>
    <property type="match status" value="1"/>
</dbReference>
<dbReference type="Pfam" id="PF06628">
    <property type="entry name" value="Catalase-rel"/>
    <property type="match status" value="1"/>
</dbReference>
<dbReference type="PIRSF" id="PIRSF038928">
    <property type="entry name" value="Catalase_clade1-3"/>
    <property type="match status" value="1"/>
</dbReference>
<dbReference type="PRINTS" id="PR00067">
    <property type="entry name" value="CATALASE"/>
</dbReference>
<dbReference type="SMART" id="SM01060">
    <property type="entry name" value="Catalase"/>
    <property type="match status" value="1"/>
</dbReference>
<dbReference type="SUPFAM" id="SSF56634">
    <property type="entry name" value="Heme-dependent catalase-like"/>
    <property type="match status" value="1"/>
</dbReference>
<dbReference type="PROSITE" id="PS00437">
    <property type="entry name" value="CATALASE_1"/>
    <property type="match status" value="1"/>
</dbReference>
<dbReference type="PROSITE" id="PS00438">
    <property type="entry name" value="CATALASE_2"/>
    <property type="match status" value="1"/>
</dbReference>
<dbReference type="PROSITE" id="PS51402">
    <property type="entry name" value="CATALASE_3"/>
    <property type="match status" value="1"/>
</dbReference>
<evidence type="ECO:0000250" key="1"/>
<evidence type="ECO:0000255" key="2"/>
<evidence type="ECO:0000255" key="3">
    <source>
        <dbReference type="PROSITE-ProRule" id="PRU10013"/>
    </source>
</evidence>
<evidence type="ECO:0000256" key="4">
    <source>
        <dbReference type="SAM" id="MobiDB-lite"/>
    </source>
</evidence>
<evidence type="ECO:0000305" key="5"/>
<keyword id="KW-0349">Heme</keyword>
<keyword id="KW-0376">Hydrogen peroxide</keyword>
<keyword id="KW-0408">Iron</keyword>
<keyword id="KW-0479">Metal-binding</keyword>
<keyword id="KW-0560">Oxidoreductase</keyword>
<keyword id="KW-0574">Periplasm</keyword>
<keyword id="KW-0575">Peroxidase</keyword>
<keyword id="KW-1185">Reference proteome</keyword>
<keyword id="KW-0732">Signal</keyword>
<gene>
    <name type="primary">katB</name>
    <name type="ordered locus">PA4613</name>
</gene>
<proteinExistence type="inferred from homology"/>
<sequence>MNPSLNAFRPGRLLVAASLTASLLSLSVQAATLTRDNGAPVGDNQNSQTAGPNGSVLLQDVQLLQKLQRFDRERIPERVVHARGTGAHGEFVASADISDLSMAKVFRKGEKTPVFVRFSAVVHGNHSPETLRDPRGFATKFYTADGNWDLVGNNFPTFFIRDAIKFPDMVHAFKPDPRSNLDDDSRRFDFFSHVPEATRTLTLLYSNEGTPASYREMDGNSVHAYKLVNARGEVHYVKFHWKSLQGQKNLDPKQVAEVQGRDYSHMTNDLVSAIRKGDFPKWDLYIQVLKPEDLAKFDFDPLDATKIWPGIPERKIGQMVLNRNVDNFFQETEQVAMAPSNLVPGIEPSEDRLLQGRLFAYADTQMYRVGANGLGLPVNRPRSEVNTVNQDGALNAGHSTSGVNYQPSRLDPREEQASARYVRTPLSGTTQQAKIQREQNFKQTGELFRSYGKKDQADLIASLGGALAITDDESKYIMLSYFYKADSDYGTGLAKVAGADLQRVRQLAAKLQD</sequence>
<accession>Q59635</accession>
<organism>
    <name type="scientific">Pseudomonas aeruginosa (strain ATCC 15692 / DSM 22644 / CIP 104116 / JCM 14847 / LMG 12228 / 1C / PRS 101 / PAO1)</name>
    <dbReference type="NCBI Taxonomy" id="208964"/>
    <lineage>
        <taxon>Bacteria</taxon>
        <taxon>Pseudomonadati</taxon>
        <taxon>Pseudomonadota</taxon>
        <taxon>Gammaproteobacteria</taxon>
        <taxon>Pseudomonadales</taxon>
        <taxon>Pseudomonadaceae</taxon>
        <taxon>Pseudomonas</taxon>
    </lineage>
</organism>
<comment type="function">
    <text>Decomposes hydrogen peroxide into water and oxygen; serves to protect cells from the toxic effects of hydrogen peroxide.</text>
</comment>
<comment type="catalytic activity">
    <reaction evidence="3">
        <text>2 H2O2 = O2 + 2 H2O</text>
        <dbReference type="Rhea" id="RHEA:20309"/>
        <dbReference type="ChEBI" id="CHEBI:15377"/>
        <dbReference type="ChEBI" id="CHEBI:15379"/>
        <dbReference type="ChEBI" id="CHEBI:16240"/>
        <dbReference type="EC" id="1.11.1.6"/>
    </reaction>
</comment>
<comment type="cofactor">
    <cofactor>
        <name>heme</name>
        <dbReference type="ChEBI" id="CHEBI:30413"/>
    </cofactor>
</comment>
<comment type="subcellular location">
    <subcellularLocation>
        <location evidence="5">Periplasm</location>
    </subcellularLocation>
</comment>
<comment type="similarity">
    <text evidence="5">Belongs to the catalase family.</text>
</comment>
<protein>
    <recommendedName>
        <fullName>Catalase</fullName>
        <ecNumber>1.11.1.6</ecNumber>
    </recommendedName>
    <alternativeName>
        <fullName>Paraquat-inducible catalase isozyme B</fullName>
    </alternativeName>
</protein>
<feature type="signal peptide" evidence="2">
    <location>
        <begin position="1"/>
        <end position="30"/>
    </location>
</feature>
<feature type="chain" id="PRO_0000004693" description="Catalase">
    <location>
        <begin position="31"/>
        <end position="513"/>
    </location>
</feature>
<feature type="region of interest" description="Disordered" evidence="4">
    <location>
        <begin position="391"/>
        <end position="413"/>
    </location>
</feature>
<feature type="compositionally biased region" description="Polar residues" evidence="4">
    <location>
        <begin position="391"/>
        <end position="407"/>
    </location>
</feature>
<feature type="active site" evidence="3">
    <location>
        <position position="81"/>
    </location>
</feature>
<feature type="active site" evidence="3">
    <location>
        <position position="153"/>
    </location>
</feature>
<feature type="binding site" description="axial binding residue" evidence="1">
    <location>
        <position position="361"/>
    </location>
    <ligand>
        <name>heme</name>
        <dbReference type="ChEBI" id="CHEBI:30413"/>
    </ligand>
    <ligandPart>
        <name>Fe</name>
        <dbReference type="ChEBI" id="CHEBI:18248"/>
    </ligandPart>
</feature>